<sequence>MAKGRTPRSFSQRYGKWNAKFTAFSNPTVASTILTNVAPIAQGNFQTNVPKFTSVNEQVSAVLTQYGVTGPSRAIYQGYGLKVARALNRIGAGPALTNMVAGLKAYYVSAYGANPEILDAVTNIILGSPTGYVS</sequence>
<protein>
    <recommendedName>
        <fullName evidence="2">Major capsid protein</fullName>
    </recommendedName>
    <alternativeName>
        <fullName evidence="2">Gp11</fullName>
    </alternativeName>
</protein>
<gene>
    <name evidence="4" type="ORF">SSRV1_gp11</name>
</gene>
<accession>A0A6M3VXD3</accession>
<accession>A0A7M4DUE5</accession>
<organism>
    <name type="scientific">Saccharolobus solfataricus rod-shaped virus 1</name>
    <name type="common">SSRV1</name>
    <dbReference type="NCBI Taxonomy" id="2730619"/>
    <lineage>
        <taxon>Viruses</taxon>
        <taxon>Adnaviria</taxon>
        <taxon>Zilligvirae</taxon>
        <taxon>Taleaviricota</taxon>
        <taxon>Tokiviricetes</taxon>
        <taxon>Ligamenvirales</taxon>
        <taxon>Rudiviridae</taxon>
        <taxon>Hoswirudivirus</taxon>
        <taxon>Hoswirudivirus SSRV1</taxon>
    </lineage>
</organism>
<feature type="chain" id="PRO_0000453805" description="Major capsid protein">
    <location>
        <begin position="1"/>
        <end position="134"/>
    </location>
</feature>
<reference key="1">
    <citation type="journal article" date="2020" name="ISME J.">
        <title>New virus isolates from Italian hydrothermal environments underscore the biogeographic pattern in archaeal virus communities.</title>
        <authorList>
            <person name="Baquero D.P."/>
            <person name="Contursi P."/>
            <person name="Piochi M."/>
            <person name="Bartolucci S."/>
            <person name="Liu Y."/>
            <person name="Cvirkaite-Krupovic V."/>
            <person name="Prangishvili D."/>
            <person name="Krupovic M."/>
        </authorList>
    </citation>
    <scope>NUCLEOTIDE SEQUENCE [LARGE SCALE GENOMIC DNA]</scope>
    <source>
        <strain evidence="3">149</strain>
    </source>
</reference>
<reference key="2">
    <citation type="journal article" date="2020" name="Proc. Natl. Acad. Sci. U.S.A.">
        <title>Structures of filamentous viruses infecting hyperthermophilic archaea explain DNA stabilization in extreme environments.</title>
        <authorList>
            <person name="Wang F."/>
            <person name="Baquero D.P."/>
            <person name="Beltran L.C."/>
            <person name="Su Z."/>
            <person name="Osinski T."/>
            <person name="Zheng W."/>
            <person name="Prangishvili D."/>
            <person name="Krupovic M."/>
            <person name="Egelman E.H."/>
        </authorList>
    </citation>
    <scope>STRUCTURE BY ELECTRON MICROSCOPY (2.80 ANGSTROMS)</scope>
    <scope>SUBUNIT</scope>
    <scope>FUNCTION</scope>
    <scope>SUBCELLULAR LOCATION</scope>
    <scope>DOMAIN</scope>
    <source>
        <strain evidence="3">149</strain>
    </source>
</reference>
<organismHost>
    <name type="scientific">Saccharolobus solfataricus</name>
    <name type="common">Sulfolobus solfataricus</name>
    <dbReference type="NCBI Taxonomy" id="2287"/>
</organismHost>
<name>CAPSD_SSRV1</name>
<dbReference type="EMBL" id="MN876841">
    <property type="protein sequence ID" value="QJF12287.1"/>
    <property type="molecule type" value="Genomic_DNA"/>
</dbReference>
<dbReference type="PDB" id="6WQ0">
    <property type="method" value="EM"/>
    <property type="resolution" value="2.80 A"/>
    <property type="chains" value="A/B/C/D/E/F/G/H/I/J/K/L/M/N/O/P/Q/R/S/T/U/V/W/a/b/c/d/e/f/g/h/i/j/k/l/m/n/o/p/q/r/s/t/u/v/w=1-134"/>
</dbReference>
<dbReference type="PDBsum" id="6WQ0"/>
<dbReference type="SMR" id="A0A6M3VXD3"/>
<dbReference type="Proteomes" id="UP000503449">
    <property type="component" value="Genome"/>
</dbReference>
<dbReference type="GO" id="GO:0019029">
    <property type="term" value="C:helical viral capsid"/>
    <property type="evidence" value="ECO:0000314"/>
    <property type="project" value="UniProtKB"/>
</dbReference>
<dbReference type="GO" id="GO:0003677">
    <property type="term" value="F:DNA binding"/>
    <property type="evidence" value="ECO:0000314"/>
    <property type="project" value="UniProtKB"/>
</dbReference>
<dbReference type="Gene3D" id="1.20.58.800">
    <property type="match status" value="1"/>
</dbReference>
<dbReference type="InterPro" id="IPR022014">
    <property type="entry name" value="Sulfobus_virus_coat_C"/>
</dbReference>
<dbReference type="Pfam" id="PF12193">
    <property type="entry name" value="Sulf_coat_C"/>
    <property type="match status" value="1"/>
</dbReference>
<proteinExistence type="evidence at protein level"/>
<keyword id="KW-0002">3D-structure</keyword>
<keyword id="KW-0238">DNA-binding</keyword>
<keyword id="KW-1185">Reference proteome</keyword>
<keyword id="KW-0946">Virion</keyword>
<evidence type="ECO:0000269" key="1">
    <source>
    </source>
</evidence>
<evidence type="ECO:0000303" key="2">
    <source>
    </source>
</evidence>
<evidence type="ECO:0000305" key="3"/>
<evidence type="ECO:0000312" key="4">
    <source>
        <dbReference type="EMBL" id="QJF12287.1"/>
    </source>
</evidence>
<comment type="function">
    <text evidence="1">Self-assembles to form a helical, filamentous nucleocapsid. The capsid proteins wrap around the DNA and maintain it in an A-form by non-specific desolvation and specific coordination of the DNA phosphate groups by positively charged residues. This certainly protects the viral DNA under conditions such as the extreme desiccation of its host.</text>
</comment>
<comment type="subunit">
    <text evidence="1">Homodimer.</text>
</comment>
<comment type="subcellular location">
    <subcellularLocation>
        <location evidence="1">Virion</location>
    </subcellularLocation>
</comment>
<comment type="domain">
    <text evidence="1">The N-terminus projects into a DNA groove.</text>
</comment>